<accession>Q9U8W8</accession>
<reference evidence="5 6" key="1">
    <citation type="journal article" date="1999" name="Proc. Natl. Acad. Sci. U.S.A.">
        <title>Horseshoe crab acetyl group-recognizing lectins involved in innate immunity are structurally related to fibrinogen.</title>
        <authorList>
            <person name="Gokudan S."/>
            <person name="Muta T."/>
            <person name="Tsuda R."/>
            <person name="Koori K."/>
            <person name="Kawahara T."/>
            <person name="Seki N."/>
            <person name="Mizunoe Y."/>
            <person name="Wai S.N."/>
            <person name="Iwanaga S."/>
            <person name="Kawabata S."/>
        </authorList>
    </citation>
    <scope>NUCLEOTIDE SEQUENCE [MRNA]</scope>
    <scope>PROTEIN SEQUENCE OF 24-31; 104-109 AND 275-280</scope>
    <scope>FUNCTION</scope>
    <scope>SUBUNIT</scope>
    <scope>TISSUE SPECIFICITY</scope>
    <scope>PYROGLUTAMATE FORMATION AT GLN-24</scope>
    <source>
        <tissue evidence="3">Heart</tissue>
    </source>
</reference>
<reference evidence="7" key="2">
    <citation type="journal article" date="2001" name="Proc. Natl. Acad. Sci. U.S.A.">
        <title>The 2.0-A crystal structure of tachylectin 5A provides evidence for the common origin of the innate immunity and the blood coagulation systems.</title>
        <authorList>
            <person name="Kairies N."/>
            <person name="Beisel H.-G."/>
            <person name="Fuentes-Prior P."/>
            <person name="Tsuda R."/>
            <person name="Muta T."/>
            <person name="Iwanaga S."/>
            <person name="Bode W."/>
            <person name="Huber R."/>
            <person name="Kawabata S."/>
        </authorList>
    </citation>
    <scope>X-RAY CRYSTALLOGRAPHY (2.01 ANGSTROMS) OF 24-292</scope>
    <scope>SUBUNIT</scope>
</reference>
<feature type="signal peptide" evidence="3">
    <location>
        <begin position="1"/>
        <end position="23"/>
    </location>
</feature>
<feature type="chain" id="PRO_0000260045" description="Techylectin-5A" evidence="3">
    <location>
        <begin position="24"/>
        <end position="292"/>
    </location>
</feature>
<feature type="domain" description="Fibrinogen C-terminal" evidence="2">
    <location>
        <begin position="63"/>
        <end position="286"/>
    </location>
</feature>
<feature type="binding site" evidence="4">
    <location>
        <position position="221"/>
    </location>
    <ligand>
        <name>Ca(2+)</name>
        <dbReference type="ChEBI" id="CHEBI:29108"/>
    </ligand>
</feature>
<feature type="binding site" evidence="4">
    <location>
        <position position="225"/>
    </location>
    <ligand>
        <name>Ca(2+)</name>
        <dbReference type="ChEBI" id="CHEBI:29108"/>
    </ligand>
</feature>
<feature type="binding site" evidence="4">
    <location>
        <position position="227"/>
    </location>
    <ligand>
        <name>Ca(2+)</name>
        <dbReference type="ChEBI" id="CHEBI:29108"/>
    </ligand>
</feature>
<feature type="site" description="Implicated in ligand binding" evidence="4">
    <location>
        <position position="209"/>
    </location>
</feature>
<feature type="site" description="Implicated in ligand binding" evidence="4">
    <location>
        <position position="233"/>
    </location>
</feature>
<feature type="site" description="Implicated in ligand binding" evidence="4">
    <location>
        <position position="243"/>
    </location>
</feature>
<feature type="site" description="Implicated in ligand binding" evidence="4">
    <location>
        <position position="259"/>
    </location>
</feature>
<feature type="site" description="Implicated in ligand binding" evidence="4">
    <location>
        <position position="260"/>
    </location>
</feature>
<feature type="site" description="Implicated in ligand binding" evidence="4">
    <location>
        <position position="271"/>
    </location>
</feature>
<feature type="modified residue" description="Pyrrolidone carboxylic acid" evidence="3">
    <location>
        <position position="24"/>
    </location>
</feature>
<feature type="glycosylation site" description="N-linked (GlcNAc...) asparagine" evidence="1">
    <location>
        <position position="173"/>
    </location>
</feature>
<feature type="glycosylation site" description="N-linked (GlcNAc...) asparagine" evidence="1">
    <location>
        <position position="198"/>
    </location>
</feature>
<feature type="glycosylation site" description="N-linked (GlcNAc...) asparagine" evidence="1">
    <location>
        <position position="214"/>
    </location>
</feature>
<feature type="disulfide bond" evidence="2 4">
    <location>
        <begin position="72"/>
        <end position="103"/>
    </location>
</feature>
<feature type="disulfide bond" evidence="2 4">
    <location>
        <begin position="229"/>
        <end position="242"/>
    </location>
</feature>
<feature type="helix" evidence="8">
    <location>
        <begin position="72"/>
        <end position="77"/>
    </location>
</feature>
<feature type="strand" evidence="8">
    <location>
        <begin position="84"/>
        <end position="88"/>
    </location>
</feature>
<feature type="helix" evidence="8">
    <location>
        <begin position="93"/>
        <end position="96"/>
    </location>
</feature>
<feature type="strand" evidence="8">
    <location>
        <begin position="99"/>
        <end position="104"/>
    </location>
</feature>
<feature type="helix" evidence="8">
    <location>
        <begin position="107"/>
        <end position="109"/>
    </location>
</feature>
<feature type="strand" evidence="8">
    <location>
        <begin position="112"/>
        <end position="118"/>
    </location>
</feature>
<feature type="turn" evidence="8">
    <location>
        <begin position="125"/>
        <end position="128"/>
    </location>
</feature>
<feature type="helix" evidence="8">
    <location>
        <begin position="132"/>
        <end position="137"/>
    </location>
</feature>
<feature type="strand" evidence="8">
    <location>
        <begin position="144"/>
        <end position="147"/>
    </location>
</feature>
<feature type="helix" evidence="8">
    <location>
        <begin position="150"/>
        <end position="159"/>
    </location>
</feature>
<feature type="strand" evidence="8">
    <location>
        <begin position="162"/>
        <end position="169"/>
    </location>
</feature>
<feature type="strand" evidence="8">
    <location>
        <begin position="175"/>
        <end position="185"/>
    </location>
</feature>
<feature type="helix" evidence="8">
    <location>
        <begin position="188"/>
        <end position="190"/>
    </location>
</feature>
<feature type="strand" evidence="8">
    <location>
        <begin position="199"/>
        <end position="203"/>
    </location>
</feature>
<feature type="helix" evidence="8">
    <location>
        <begin position="208"/>
        <end position="210"/>
    </location>
</feature>
<feature type="strand" evidence="8">
    <location>
        <begin position="223"/>
        <end position="227"/>
    </location>
</feature>
<feature type="helix" evidence="8">
    <location>
        <begin position="229"/>
        <end position="233"/>
    </location>
</feature>
<feature type="strand" evidence="8">
    <location>
        <begin position="240"/>
        <end position="242"/>
    </location>
</feature>
<feature type="strand" evidence="8">
    <location>
        <begin position="257"/>
        <end position="260"/>
    </location>
</feature>
<feature type="helix" evidence="8">
    <location>
        <begin position="266"/>
        <end position="269"/>
    </location>
</feature>
<feature type="strand" evidence="8">
    <location>
        <begin position="272"/>
        <end position="274"/>
    </location>
</feature>
<feature type="strand" evidence="8">
    <location>
        <begin position="276"/>
        <end position="284"/>
    </location>
</feature>
<name>TL5A_TACTR</name>
<comment type="function">
    <text evidence="3">Lectin involved in innate immunity. Agglutinates all types of human erythrocytes, Gram-positive and Gram-negative bacteria. Has a stronger agglutinating activity towards Gram-negative bacteria than towards Gram-positive bacteria. Specifically recognizes acetyl group-containing substances on agglutinated cells. The hemagglutinating activity was inhibited by EDTA, acetyl group-containing mono- and disaccharides, N-acetyl derivatives of amino acids, other acetyl group-containing substances, propionamide and benzamide. Enhances the antimicrobial activity of big defensin against Gram-positive bacteria but not against Gram-negative bacteria.</text>
</comment>
<comment type="subunit">
    <text evidence="3 4">Multimeric. PubMed:10468566 and PubMed:11707569 are in disagreement about the nature of the multimer, PubMed:10468566 finds hexamers and octamers, the results in PubMed:11707569 suggest tetramers.</text>
</comment>
<comment type="subcellular location">
    <subcellularLocation>
        <location>Secreted</location>
    </subcellularLocation>
</comment>
<comment type="tissue specificity">
    <text evidence="3">Strongly expressed in heart and intestine, weakly expressed in hepatopancreas. Not found in hemocytes, stomach, nervous tissue or skeletal muscle.</text>
</comment>
<protein>
    <recommendedName>
        <fullName>Techylectin-5A</fullName>
    </recommendedName>
</protein>
<organism>
    <name type="scientific">Tachypleus tridentatus</name>
    <name type="common">Japanese horseshoe crab</name>
    <dbReference type="NCBI Taxonomy" id="6853"/>
    <lineage>
        <taxon>Eukaryota</taxon>
        <taxon>Metazoa</taxon>
        <taxon>Ecdysozoa</taxon>
        <taxon>Arthropoda</taxon>
        <taxon>Chelicerata</taxon>
        <taxon>Merostomata</taxon>
        <taxon>Xiphosura</taxon>
        <taxon>Limulidae</taxon>
        <taxon>Tachypleus</taxon>
    </lineage>
</organism>
<dbReference type="EMBL" id="AB024737">
    <property type="protein sequence ID" value="BAA84188.1"/>
    <property type="molecule type" value="mRNA"/>
</dbReference>
<dbReference type="PDB" id="1JC9">
    <property type="method" value="X-ray"/>
    <property type="resolution" value="2.01 A"/>
    <property type="chains" value="A=24-292"/>
</dbReference>
<dbReference type="PDBsum" id="1JC9"/>
<dbReference type="SMR" id="Q9U8W8"/>
<dbReference type="UniLectin" id="Q9U8W8"/>
<dbReference type="EvolutionaryTrace" id="Q9U8W8"/>
<dbReference type="GO" id="GO:0005615">
    <property type="term" value="C:extracellular space"/>
    <property type="evidence" value="ECO:0007669"/>
    <property type="project" value="TreeGrafter"/>
</dbReference>
<dbReference type="GO" id="GO:0030246">
    <property type="term" value="F:carbohydrate binding"/>
    <property type="evidence" value="ECO:0000314"/>
    <property type="project" value="UniProtKB"/>
</dbReference>
<dbReference type="GO" id="GO:0046872">
    <property type="term" value="F:metal ion binding"/>
    <property type="evidence" value="ECO:0007669"/>
    <property type="project" value="UniProtKB-KW"/>
</dbReference>
<dbReference type="GO" id="GO:0098609">
    <property type="term" value="P:cell-cell adhesion"/>
    <property type="evidence" value="ECO:0000314"/>
    <property type="project" value="UniProtKB"/>
</dbReference>
<dbReference type="CDD" id="cd00087">
    <property type="entry name" value="FReD"/>
    <property type="match status" value="1"/>
</dbReference>
<dbReference type="FunFam" id="3.90.215.10:FF:000001">
    <property type="entry name" value="Tenascin isoform 1"/>
    <property type="match status" value="1"/>
</dbReference>
<dbReference type="Gene3D" id="3.90.215.10">
    <property type="entry name" value="Gamma Fibrinogen, chain A, domain 1"/>
    <property type="match status" value="1"/>
</dbReference>
<dbReference type="Gene3D" id="4.10.530.10">
    <property type="entry name" value="Gamma-fibrinogen Carboxyl Terminal Fragment, domain 2"/>
    <property type="match status" value="1"/>
</dbReference>
<dbReference type="InterPro" id="IPR036056">
    <property type="entry name" value="Fibrinogen-like_C"/>
</dbReference>
<dbReference type="InterPro" id="IPR014716">
    <property type="entry name" value="Fibrinogen_a/b/g_C_1"/>
</dbReference>
<dbReference type="InterPro" id="IPR002181">
    <property type="entry name" value="Fibrinogen_a/b/g_C_dom"/>
</dbReference>
<dbReference type="InterPro" id="IPR050373">
    <property type="entry name" value="Fibrinogen_C-term_domain"/>
</dbReference>
<dbReference type="InterPro" id="IPR020837">
    <property type="entry name" value="Fibrinogen_CS"/>
</dbReference>
<dbReference type="NCBIfam" id="NF040941">
    <property type="entry name" value="GGGWT_bact"/>
    <property type="match status" value="1"/>
</dbReference>
<dbReference type="PANTHER" id="PTHR19143:SF327">
    <property type="entry name" value="FI21813P1-RELATED"/>
    <property type="match status" value="1"/>
</dbReference>
<dbReference type="PANTHER" id="PTHR19143">
    <property type="entry name" value="FIBRINOGEN/TENASCIN/ANGIOPOEITIN"/>
    <property type="match status" value="1"/>
</dbReference>
<dbReference type="Pfam" id="PF00147">
    <property type="entry name" value="Fibrinogen_C"/>
    <property type="match status" value="1"/>
</dbReference>
<dbReference type="SMART" id="SM00186">
    <property type="entry name" value="FBG"/>
    <property type="match status" value="1"/>
</dbReference>
<dbReference type="SUPFAM" id="SSF56496">
    <property type="entry name" value="Fibrinogen C-terminal domain-like"/>
    <property type="match status" value="1"/>
</dbReference>
<dbReference type="PROSITE" id="PS00514">
    <property type="entry name" value="FIBRINOGEN_C_1"/>
    <property type="match status" value="1"/>
</dbReference>
<dbReference type="PROSITE" id="PS51406">
    <property type="entry name" value="FIBRINOGEN_C_2"/>
    <property type="match status" value="1"/>
</dbReference>
<keyword id="KW-0002">3D-structure</keyword>
<keyword id="KW-0106">Calcium</keyword>
<keyword id="KW-0903">Direct protein sequencing</keyword>
<keyword id="KW-1015">Disulfide bond</keyword>
<keyword id="KW-0325">Glycoprotein</keyword>
<keyword id="KW-0430">Lectin</keyword>
<keyword id="KW-0479">Metal-binding</keyword>
<keyword id="KW-0873">Pyrrolidone carboxylic acid</keyword>
<keyword id="KW-0964">Secreted</keyword>
<keyword id="KW-0732">Signal</keyword>
<evidence type="ECO:0000255" key="1"/>
<evidence type="ECO:0000255" key="2">
    <source>
        <dbReference type="PROSITE-ProRule" id="PRU00739"/>
    </source>
</evidence>
<evidence type="ECO:0000269" key="3">
    <source>
    </source>
</evidence>
<evidence type="ECO:0000269" key="4">
    <source>
    </source>
</evidence>
<evidence type="ECO:0000305" key="5"/>
<evidence type="ECO:0000312" key="6">
    <source>
        <dbReference type="EMBL" id="BAA84188.1"/>
    </source>
</evidence>
<evidence type="ECO:0000312" key="7">
    <source>
        <dbReference type="PDB" id="1JC9"/>
    </source>
</evidence>
<evidence type="ECO:0007829" key="8">
    <source>
        <dbReference type="PDB" id="1JC9"/>
    </source>
</evidence>
<proteinExistence type="evidence at protein level"/>
<sequence length="292" mass="33787">MHNLRNILFVITLIGQKYGLTSSQNKELCDVTSSTGLLDSIKVMASHVKEQLKDKGTSEVAQPIVSPDPTDCADILLNGYRSSGGYRIWPKSWMTVGTLNVYCDMETDGGGWTVIQRRGNYGNPSDYFYKPWKNYKLGFGNIEKDFWLGNDRIFALTNQRNYMIRFDLKDKENDTRYAIYQDFWIENEDYLYCLHIGNYSGDAGNSFGRHNGHNFSTIDKDHDTHETHCAQTYKGGWWYDRCHESNLNGLYLNGEHNSYADGIEWRAWKGYHYSLPQVEMKIRPVEFNIIGN</sequence>